<dbReference type="EC" id="2.7.1.167" evidence="1"/>
<dbReference type="EC" id="2.7.7.70" evidence="1"/>
<dbReference type="EMBL" id="CP000283">
    <property type="protein sequence ID" value="ABE38852.1"/>
    <property type="molecule type" value="Genomic_DNA"/>
</dbReference>
<dbReference type="SMR" id="Q13AN7"/>
<dbReference type="STRING" id="316057.RPD_1615"/>
<dbReference type="KEGG" id="rpd:RPD_1615"/>
<dbReference type="eggNOG" id="COG0615">
    <property type="taxonomic scope" value="Bacteria"/>
</dbReference>
<dbReference type="eggNOG" id="COG2870">
    <property type="taxonomic scope" value="Bacteria"/>
</dbReference>
<dbReference type="HOGENOM" id="CLU_021150_2_1_5"/>
<dbReference type="BioCyc" id="RPAL316057:RPD_RS08145-MONOMER"/>
<dbReference type="UniPathway" id="UPA00356">
    <property type="reaction ID" value="UER00437"/>
</dbReference>
<dbReference type="UniPathway" id="UPA00356">
    <property type="reaction ID" value="UER00439"/>
</dbReference>
<dbReference type="Proteomes" id="UP000001818">
    <property type="component" value="Chromosome"/>
</dbReference>
<dbReference type="GO" id="GO:0005829">
    <property type="term" value="C:cytosol"/>
    <property type="evidence" value="ECO:0007669"/>
    <property type="project" value="TreeGrafter"/>
</dbReference>
<dbReference type="GO" id="GO:0005524">
    <property type="term" value="F:ATP binding"/>
    <property type="evidence" value="ECO:0007669"/>
    <property type="project" value="UniProtKB-UniRule"/>
</dbReference>
<dbReference type="GO" id="GO:0033785">
    <property type="term" value="F:heptose 7-phosphate kinase activity"/>
    <property type="evidence" value="ECO:0007669"/>
    <property type="project" value="UniProtKB-UniRule"/>
</dbReference>
<dbReference type="GO" id="GO:0033786">
    <property type="term" value="F:heptose-1-phosphate adenylyltransferase activity"/>
    <property type="evidence" value="ECO:0007669"/>
    <property type="project" value="UniProtKB-UniRule"/>
</dbReference>
<dbReference type="GO" id="GO:0016773">
    <property type="term" value="F:phosphotransferase activity, alcohol group as acceptor"/>
    <property type="evidence" value="ECO:0007669"/>
    <property type="project" value="InterPro"/>
</dbReference>
<dbReference type="GO" id="GO:0097171">
    <property type="term" value="P:ADP-L-glycero-beta-D-manno-heptose biosynthetic process"/>
    <property type="evidence" value="ECO:0007669"/>
    <property type="project" value="UniProtKB-UniPathway"/>
</dbReference>
<dbReference type="CDD" id="cd01172">
    <property type="entry name" value="RfaE_like"/>
    <property type="match status" value="1"/>
</dbReference>
<dbReference type="Gene3D" id="3.40.1190.20">
    <property type="match status" value="1"/>
</dbReference>
<dbReference type="Gene3D" id="3.40.50.620">
    <property type="entry name" value="HUPs"/>
    <property type="match status" value="1"/>
</dbReference>
<dbReference type="HAMAP" id="MF_01603">
    <property type="entry name" value="HldE"/>
    <property type="match status" value="1"/>
</dbReference>
<dbReference type="InterPro" id="IPR023030">
    <property type="entry name" value="Bifunc_HldE"/>
</dbReference>
<dbReference type="InterPro" id="IPR002173">
    <property type="entry name" value="Carboh/pur_kinase_PfkB_CS"/>
</dbReference>
<dbReference type="InterPro" id="IPR004821">
    <property type="entry name" value="Cyt_trans-like"/>
</dbReference>
<dbReference type="InterPro" id="IPR011611">
    <property type="entry name" value="PfkB_dom"/>
</dbReference>
<dbReference type="InterPro" id="IPR011913">
    <property type="entry name" value="RfaE_dom_I"/>
</dbReference>
<dbReference type="InterPro" id="IPR011914">
    <property type="entry name" value="RfaE_dom_II"/>
</dbReference>
<dbReference type="InterPro" id="IPR029056">
    <property type="entry name" value="Ribokinase-like"/>
</dbReference>
<dbReference type="InterPro" id="IPR014729">
    <property type="entry name" value="Rossmann-like_a/b/a_fold"/>
</dbReference>
<dbReference type="NCBIfam" id="TIGR00125">
    <property type="entry name" value="cyt_tran_rel"/>
    <property type="match status" value="1"/>
</dbReference>
<dbReference type="NCBIfam" id="TIGR02198">
    <property type="entry name" value="rfaE_dom_I"/>
    <property type="match status" value="1"/>
</dbReference>
<dbReference type="NCBIfam" id="TIGR02199">
    <property type="entry name" value="rfaE_dom_II"/>
    <property type="match status" value="1"/>
</dbReference>
<dbReference type="PANTHER" id="PTHR46969">
    <property type="entry name" value="BIFUNCTIONAL PROTEIN HLDE"/>
    <property type="match status" value="1"/>
</dbReference>
<dbReference type="PANTHER" id="PTHR46969:SF1">
    <property type="entry name" value="BIFUNCTIONAL PROTEIN HLDE"/>
    <property type="match status" value="1"/>
</dbReference>
<dbReference type="Pfam" id="PF01467">
    <property type="entry name" value="CTP_transf_like"/>
    <property type="match status" value="1"/>
</dbReference>
<dbReference type="Pfam" id="PF00294">
    <property type="entry name" value="PfkB"/>
    <property type="match status" value="1"/>
</dbReference>
<dbReference type="SUPFAM" id="SSF52374">
    <property type="entry name" value="Nucleotidylyl transferase"/>
    <property type="match status" value="1"/>
</dbReference>
<dbReference type="SUPFAM" id="SSF53613">
    <property type="entry name" value="Ribokinase-like"/>
    <property type="match status" value="1"/>
</dbReference>
<dbReference type="PROSITE" id="PS00583">
    <property type="entry name" value="PFKB_KINASES_1"/>
    <property type="match status" value="1"/>
</dbReference>
<comment type="function">
    <text evidence="1">Catalyzes the phosphorylation of D-glycero-D-manno-heptose 7-phosphate at the C-1 position to selectively form D-glycero-beta-D-manno-heptose-1,7-bisphosphate.</text>
</comment>
<comment type="function">
    <text evidence="1">Catalyzes the ADP transfer from ATP to D-glycero-beta-D-manno-heptose 1-phosphate, yielding ADP-D-glycero-beta-D-manno-heptose.</text>
</comment>
<comment type="catalytic activity">
    <reaction evidence="1">
        <text>D-glycero-beta-D-manno-heptose 7-phosphate + ATP = D-glycero-beta-D-manno-heptose 1,7-bisphosphate + ADP + H(+)</text>
        <dbReference type="Rhea" id="RHEA:27473"/>
        <dbReference type="ChEBI" id="CHEBI:15378"/>
        <dbReference type="ChEBI" id="CHEBI:30616"/>
        <dbReference type="ChEBI" id="CHEBI:60204"/>
        <dbReference type="ChEBI" id="CHEBI:60208"/>
        <dbReference type="ChEBI" id="CHEBI:456216"/>
        <dbReference type="EC" id="2.7.1.167"/>
    </reaction>
</comment>
<comment type="catalytic activity">
    <reaction evidence="1">
        <text>D-glycero-beta-D-manno-heptose 1-phosphate + ATP + H(+) = ADP-D-glycero-beta-D-manno-heptose + diphosphate</text>
        <dbReference type="Rhea" id="RHEA:27465"/>
        <dbReference type="ChEBI" id="CHEBI:15378"/>
        <dbReference type="ChEBI" id="CHEBI:30616"/>
        <dbReference type="ChEBI" id="CHEBI:33019"/>
        <dbReference type="ChEBI" id="CHEBI:59967"/>
        <dbReference type="ChEBI" id="CHEBI:61593"/>
        <dbReference type="EC" id="2.7.7.70"/>
    </reaction>
</comment>
<comment type="pathway">
    <text evidence="1">Nucleotide-sugar biosynthesis; ADP-L-glycero-beta-D-manno-heptose biosynthesis; ADP-L-glycero-beta-D-manno-heptose from D-glycero-beta-D-manno-heptose 7-phosphate: step 1/4.</text>
</comment>
<comment type="pathway">
    <text evidence="1">Nucleotide-sugar biosynthesis; ADP-L-glycero-beta-D-manno-heptose biosynthesis; ADP-L-glycero-beta-D-manno-heptose from D-glycero-beta-D-manno-heptose 7-phosphate: step 3/4.</text>
</comment>
<comment type="subunit">
    <text evidence="1">Homodimer.</text>
</comment>
<comment type="similarity">
    <text evidence="1">In the N-terminal section; belongs to the carbohydrate kinase PfkB family.</text>
</comment>
<comment type="similarity">
    <text evidence="1">In the C-terminal section; belongs to the cytidylyltransferase family.</text>
</comment>
<proteinExistence type="inferred from homology"/>
<evidence type="ECO:0000255" key="1">
    <source>
        <dbReference type="HAMAP-Rule" id="MF_01603"/>
    </source>
</evidence>
<name>HLDE_RHOPS</name>
<accession>Q13AN7</accession>
<feature type="chain" id="PRO_0000291685" description="Bifunctional protein HldE">
    <location>
        <begin position="1"/>
        <end position="490"/>
    </location>
</feature>
<feature type="region of interest" description="Ribokinase">
    <location>
        <begin position="1"/>
        <end position="330"/>
    </location>
</feature>
<feature type="region of interest" description="Cytidylyltransferase">
    <location>
        <begin position="358"/>
        <end position="490"/>
    </location>
</feature>
<feature type="active site" evidence="1">
    <location>
        <position position="275"/>
    </location>
</feature>
<feature type="binding site" evidence="1">
    <location>
        <begin position="205"/>
        <end position="208"/>
    </location>
    <ligand>
        <name>ATP</name>
        <dbReference type="ChEBI" id="CHEBI:30616"/>
    </ligand>
</feature>
<organism>
    <name type="scientific">Rhodopseudomonas palustris (strain BisB5)</name>
    <dbReference type="NCBI Taxonomy" id="316057"/>
    <lineage>
        <taxon>Bacteria</taxon>
        <taxon>Pseudomonadati</taxon>
        <taxon>Pseudomonadota</taxon>
        <taxon>Alphaproteobacteria</taxon>
        <taxon>Hyphomicrobiales</taxon>
        <taxon>Nitrobacteraceae</taxon>
        <taxon>Rhodopseudomonas</taxon>
    </lineage>
</organism>
<protein>
    <recommendedName>
        <fullName evidence="1">Bifunctional protein HldE</fullName>
    </recommendedName>
    <domain>
        <recommendedName>
            <fullName evidence="1">D-beta-D-heptose 7-phosphate kinase</fullName>
            <ecNumber evidence="1">2.7.1.167</ecNumber>
        </recommendedName>
        <alternativeName>
            <fullName evidence="1">D-beta-D-heptose 7-phosphotransferase</fullName>
        </alternativeName>
        <alternativeName>
            <fullName evidence="1">D-glycero-beta-D-manno-heptose-7-phosphate kinase</fullName>
        </alternativeName>
    </domain>
    <domain>
        <recommendedName>
            <fullName evidence="1">D-beta-D-heptose 1-phosphate adenylyltransferase</fullName>
            <ecNumber evidence="1">2.7.7.70</ecNumber>
        </recommendedName>
        <alternativeName>
            <fullName evidence="1">D-glycero-beta-D-manno-heptose 1-phosphate adenylyltransferase</fullName>
        </alternativeName>
    </domain>
</protein>
<reference key="1">
    <citation type="submission" date="2006-03" db="EMBL/GenBank/DDBJ databases">
        <title>Complete sequence of Rhodopseudomonas palustris BisB5.</title>
        <authorList>
            <consortium name="US DOE Joint Genome Institute"/>
            <person name="Copeland A."/>
            <person name="Lucas S."/>
            <person name="Lapidus A."/>
            <person name="Barry K."/>
            <person name="Detter J.C."/>
            <person name="Glavina del Rio T."/>
            <person name="Hammon N."/>
            <person name="Israni S."/>
            <person name="Dalin E."/>
            <person name="Tice H."/>
            <person name="Pitluck S."/>
            <person name="Chain P."/>
            <person name="Malfatti S."/>
            <person name="Shin M."/>
            <person name="Vergez L."/>
            <person name="Schmutz J."/>
            <person name="Larimer F."/>
            <person name="Land M."/>
            <person name="Hauser L."/>
            <person name="Pelletier D.A."/>
            <person name="Kyrpides N."/>
            <person name="Lykidis A."/>
            <person name="Oda Y."/>
            <person name="Harwood C.S."/>
            <person name="Richardson P."/>
        </authorList>
    </citation>
    <scope>NUCLEOTIDE SEQUENCE [LARGE SCALE GENOMIC DNA]</scope>
    <source>
        <strain>BisB5</strain>
    </source>
</reference>
<gene>
    <name evidence="1" type="primary">hldE</name>
    <name type="ordered locus">RPD_1615</name>
</gene>
<sequence>MSRFDTLLQSIARTTVLCVGDLMLDEFVYGEVSRISPEAPTPVIAVQRSEINVGGAGNVARNIAAIGARCIFVGLIGDDEAGRTLSAEIARESRIEPLLVCDPARPTTRKVRFVSEHFSTHMLRADWETASAASSEIEQRLLDAILPQLQRADIVLLSDYAKGVLTERVIVSVIEAARKLGKRVIVDPKSANFAIYRGATLLTPNRKEFVSATRSAAETVDDIAAAAQDAMALADCEAMLVTQSEHGMTLVPRVGEPIHVPAMPVKVRDVSGAGDTVAAVLAVVLAAGADWATAMRAASAAAAVAVSKNGTAVVTPAELRRKILPHASLAAEEKIIGSEAELDLRLAEWRREGLRVGFTNGCFDILHPGHVKVLTAARGACDRLIVGLNSDASVRRLKGESRPVQNERARAEVLAALEAVDLVAIFGEDTPLKLIKRIVPSVLVKGGDYTREQVVGHEIVAARGGEVLLVDVLPGFSTTSLVEKAREGTT</sequence>
<keyword id="KW-0067">ATP-binding</keyword>
<keyword id="KW-0119">Carbohydrate metabolism</keyword>
<keyword id="KW-0418">Kinase</keyword>
<keyword id="KW-0511">Multifunctional enzyme</keyword>
<keyword id="KW-0547">Nucleotide-binding</keyword>
<keyword id="KW-0548">Nucleotidyltransferase</keyword>
<keyword id="KW-0808">Transferase</keyword>